<proteinExistence type="evidence at transcript level"/>
<comment type="function">
    <text evidence="2">RNA-binding protein that binds to iron-responsive elements (IRES), which are stem-loop structures found in the 5'-UTR of ferritin, and delta aminolevulinic acid synthase mRNAs, and in the 3'-UTR of transferrin receptor mRNA. Binding to the IRE element in ferritin results in the repression of its mRNA translation. Binding of the protein to the transferrin receptor mRNA inhibits the degradation of this otherwise rapidly degraded mRNA.</text>
</comment>
<comment type="cofactor">
    <cofactor evidence="1">
        <name>[4Fe-4S] cluster</name>
        <dbReference type="ChEBI" id="CHEBI:49883"/>
    </cofactor>
    <text evidence="1">Binds 1 [4Fe-4S] cluster per subunit. [4Fe-4S]-binding affects RNA-binding activity, thereby inhibiting activity of the protein.</text>
</comment>
<comment type="subunit">
    <text evidence="2 3">Interacts with RBCK1 only in iron-rich conditions. Interacts (when associated with the 4Fe-4S) with FBXL5 (By similarity). Interacts with CIAO1 and CIAO2A (By similarity).</text>
</comment>
<comment type="subcellular location">
    <subcellularLocation>
        <location evidence="1">Cytoplasm</location>
    </subcellularLocation>
</comment>
<comment type="PTM">
    <text evidence="1">Ubiquitinated and degraded by the proteasome in presence of high level of iron and oxygen. Ubiquitinated by a SCF complex containing FBXL5. Upon iron and oxygen depletion FBXL5 is degraded, preventing ubiquitination and allowing its RNA-binding activity (By similarity).</text>
</comment>
<comment type="similarity">
    <text evidence="4">Belongs to the aconitase/IPM isomerase family.</text>
</comment>
<reference key="1">
    <citation type="submission" date="2008-05" db="EMBL/GenBank/DDBJ databases">
        <authorList>
            <person name="Wu Y.-X."/>
            <person name="Wang Y.-L."/>
            <person name="Zhao W.-D."/>
            <person name="Wang J."/>
            <person name="Zhang Z.-Q."/>
            <person name="Zang M."/>
            <person name="Tai Y.-L."/>
            <person name="Wang W.-J."/>
            <person name="Yang G.-Y."/>
        </authorList>
    </citation>
    <scope>NUCLEOTIDE SEQUENCE [MRNA]</scope>
</reference>
<gene>
    <name type="primary">IREB2</name>
</gene>
<organism>
    <name type="scientific">Sus scrofa</name>
    <name type="common">Pig</name>
    <dbReference type="NCBI Taxonomy" id="9823"/>
    <lineage>
        <taxon>Eukaryota</taxon>
        <taxon>Metazoa</taxon>
        <taxon>Chordata</taxon>
        <taxon>Craniata</taxon>
        <taxon>Vertebrata</taxon>
        <taxon>Euteleostomi</taxon>
        <taxon>Mammalia</taxon>
        <taxon>Eutheria</taxon>
        <taxon>Laurasiatheria</taxon>
        <taxon>Artiodactyla</taxon>
        <taxon>Suina</taxon>
        <taxon>Suidae</taxon>
        <taxon>Sus</taxon>
    </lineage>
</organism>
<feature type="chain" id="PRO_0000380115" description="Iron-responsive element-binding protein 2">
    <location>
        <begin position="1"/>
        <end position="964"/>
    </location>
</feature>
<feature type="binding site" evidence="1">
    <location>
        <position position="513"/>
    </location>
    <ligand>
        <name>[4Fe-4S] cluster</name>
        <dbReference type="ChEBI" id="CHEBI:49883"/>
    </ligand>
</feature>
<feature type="binding site" evidence="1">
    <location>
        <position position="579"/>
    </location>
    <ligand>
        <name>[4Fe-4S] cluster</name>
        <dbReference type="ChEBI" id="CHEBI:49883"/>
    </ligand>
</feature>
<feature type="binding site" evidence="1">
    <location>
        <position position="582"/>
    </location>
    <ligand>
        <name>[4Fe-4S] cluster</name>
        <dbReference type="ChEBI" id="CHEBI:49883"/>
    </ligand>
</feature>
<accession>B3VKQ2</accession>
<dbReference type="EMBL" id="EU755259">
    <property type="protein sequence ID" value="ACE78187.1"/>
    <property type="molecule type" value="mRNA"/>
</dbReference>
<dbReference type="SMR" id="B3VKQ2"/>
<dbReference type="FunCoup" id="B3VKQ2">
    <property type="interactions" value="488"/>
</dbReference>
<dbReference type="STRING" id="9823.ENSSSCP00000001913"/>
<dbReference type="PaxDb" id="9823-ENSSSCP00000025570"/>
<dbReference type="PeptideAtlas" id="B3VKQ2"/>
<dbReference type="Ensembl" id="ENSSSCT00070039612.1">
    <property type="protein sequence ID" value="ENSSSCP00070033178.1"/>
    <property type="gene ID" value="ENSSSCG00070019970.1"/>
</dbReference>
<dbReference type="Ensembl" id="ENSSSCT00090037796">
    <property type="protein sequence ID" value="ENSSSCP00090023561"/>
    <property type="gene ID" value="ENSSSCG00090021304"/>
</dbReference>
<dbReference type="Ensembl" id="ENSSSCT00115008771">
    <property type="protein sequence ID" value="ENSSSCP00115008242"/>
    <property type="gene ID" value="ENSSSCG00115005090"/>
</dbReference>
<dbReference type="eggNOG" id="KOG0452">
    <property type="taxonomic scope" value="Eukaryota"/>
</dbReference>
<dbReference type="HOGENOM" id="CLU_013476_2_1_1"/>
<dbReference type="InParanoid" id="B3VKQ2"/>
<dbReference type="TreeFam" id="TF313476"/>
<dbReference type="Reactome" id="R-SSC-917937">
    <property type="pathway name" value="Iron uptake and transport"/>
</dbReference>
<dbReference type="Proteomes" id="UP000008227">
    <property type="component" value="Unplaced"/>
</dbReference>
<dbReference type="Proteomes" id="UP000314985">
    <property type="component" value="Chromosome 7"/>
</dbReference>
<dbReference type="Proteomes" id="UP000694570">
    <property type="component" value="Unplaced"/>
</dbReference>
<dbReference type="Proteomes" id="UP000694571">
    <property type="component" value="Unplaced"/>
</dbReference>
<dbReference type="Proteomes" id="UP000694720">
    <property type="component" value="Unplaced"/>
</dbReference>
<dbReference type="Proteomes" id="UP000694722">
    <property type="component" value="Unplaced"/>
</dbReference>
<dbReference type="Proteomes" id="UP000694723">
    <property type="component" value="Unplaced"/>
</dbReference>
<dbReference type="Proteomes" id="UP000694724">
    <property type="component" value="Unplaced"/>
</dbReference>
<dbReference type="Proteomes" id="UP000694725">
    <property type="component" value="Unplaced"/>
</dbReference>
<dbReference type="Proteomes" id="UP000694726">
    <property type="component" value="Unplaced"/>
</dbReference>
<dbReference type="Proteomes" id="UP000694727">
    <property type="component" value="Unplaced"/>
</dbReference>
<dbReference type="Proteomes" id="UP000694728">
    <property type="component" value="Unplaced"/>
</dbReference>
<dbReference type="GO" id="GO:0005829">
    <property type="term" value="C:cytosol"/>
    <property type="evidence" value="ECO:0000318"/>
    <property type="project" value="GO_Central"/>
</dbReference>
<dbReference type="GO" id="GO:0051539">
    <property type="term" value="F:4 iron, 4 sulfur cluster binding"/>
    <property type="evidence" value="ECO:0000318"/>
    <property type="project" value="GO_Central"/>
</dbReference>
<dbReference type="GO" id="GO:0003994">
    <property type="term" value="F:aconitate hydratase activity"/>
    <property type="evidence" value="ECO:0000318"/>
    <property type="project" value="GO_Central"/>
</dbReference>
<dbReference type="GO" id="GO:0030350">
    <property type="term" value="F:iron-responsive element binding"/>
    <property type="evidence" value="ECO:0000250"/>
    <property type="project" value="UniProtKB"/>
</dbReference>
<dbReference type="GO" id="GO:0046872">
    <property type="term" value="F:metal ion binding"/>
    <property type="evidence" value="ECO:0007669"/>
    <property type="project" value="UniProtKB-KW"/>
</dbReference>
<dbReference type="GO" id="GO:0006879">
    <property type="term" value="P:intracellular iron ion homeostasis"/>
    <property type="evidence" value="ECO:0000250"/>
    <property type="project" value="UniProtKB"/>
</dbReference>
<dbReference type="CDD" id="cd01586">
    <property type="entry name" value="AcnA_IRP"/>
    <property type="match status" value="1"/>
</dbReference>
<dbReference type="CDD" id="cd01580">
    <property type="entry name" value="AcnA_IRP_Swivel"/>
    <property type="match status" value="1"/>
</dbReference>
<dbReference type="FunFam" id="3.30.499.10:FF:000005">
    <property type="entry name" value="cytoplasmic aconitate hydratase"/>
    <property type="match status" value="1"/>
</dbReference>
<dbReference type="FunFam" id="3.30.499.10:FF:000011">
    <property type="entry name" value="Iron-responsive element binding protein 2"/>
    <property type="match status" value="1"/>
</dbReference>
<dbReference type="FunFam" id="3.30.499.10:FF:000012">
    <property type="entry name" value="Iron-responsive element binding protein 2"/>
    <property type="match status" value="1"/>
</dbReference>
<dbReference type="FunFam" id="3.20.19.10:FF:000005">
    <property type="entry name" value="Iron-responsive element-binding protein 2"/>
    <property type="match status" value="1"/>
</dbReference>
<dbReference type="Gene3D" id="6.10.190.10">
    <property type="match status" value="1"/>
</dbReference>
<dbReference type="Gene3D" id="3.30.499.10">
    <property type="entry name" value="Aconitase, domain 3"/>
    <property type="match status" value="3"/>
</dbReference>
<dbReference type="Gene3D" id="3.20.19.10">
    <property type="entry name" value="Aconitase, domain 4"/>
    <property type="match status" value="1"/>
</dbReference>
<dbReference type="InterPro" id="IPR044137">
    <property type="entry name" value="AcnA_IRP_Swivel"/>
</dbReference>
<dbReference type="InterPro" id="IPR015931">
    <property type="entry name" value="Acnase/IPM_dHydase_lsu_aba_1/3"/>
</dbReference>
<dbReference type="InterPro" id="IPR001030">
    <property type="entry name" value="Acoase/IPM_deHydtase_lsu_aba"/>
</dbReference>
<dbReference type="InterPro" id="IPR015928">
    <property type="entry name" value="Aconitase/3IPM_dehydase_swvl"/>
</dbReference>
<dbReference type="InterPro" id="IPR006249">
    <property type="entry name" value="Aconitase/IRP2"/>
</dbReference>
<dbReference type="InterPro" id="IPR018136">
    <property type="entry name" value="Aconitase_4Fe-4S_BS"/>
</dbReference>
<dbReference type="InterPro" id="IPR036008">
    <property type="entry name" value="Aconitase_4Fe-4S_dom"/>
</dbReference>
<dbReference type="InterPro" id="IPR000573">
    <property type="entry name" value="AconitaseA/IPMdHydase_ssu_swvl"/>
</dbReference>
<dbReference type="NCBIfam" id="TIGR01341">
    <property type="entry name" value="aconitase_1"/>
    <property type="match status" value="1"/>
</dbReference>
<dbReference type="NCBIfam" id="NF006757">
    <property type="entry name" value="PRK09277.1"/>
    <property type="match status" value="1"/>
</dbReference>
<dbReference type="NCBIfam" id="NF009520">
    <property type="entry name" value="PRK12881.1"/>
    <property type="match status" value="1"/>
</dbReference>
<dbReference type="PANTHER" id="PTHR11670">
    <property type="entry name" value="ACONITASE/IRON-RESPONSIVE ELEMENT FAMILY MEMBER"/>
    <property type="match status" value="1"/>
</dbReference>
<dbReference type="Pfam" id="PF00330">
    <property type="entry name" value="Aconitase"/>
    <property type="match status" value="2"/>
</dbReference>
<dbReference type="Pfam" id="PF00694">
    <property type="entry name" value="Aconitase_C"/>
    <property type="match status" value="1"/>
</dbReference>
<dbReference type="PRINTS" id="PR00415">
    <property type="entry name" value="ACONITASE"/>
</dbReference>
<dbReference type="SUPFAM" id="SSF53732">
    <property type="entry name" value="Aconitase iron-sulfur domain"/>
    <property type="match status" value="1"/>
</dbReference>
<dbReference type="SUPFAM" id="SSF52016">
    <property type="entry name" value="LeuD/IlvD-like"/>
    <property type="match status" value="1"/>
</dbReference>
<dbReference type="PROSITE" id="PS00450">
    <property type="entry name" value="ACONITASE_1"/>
    <property type="match status" value="1"/>
</dbReference>
<dbReference type="PROSITE" id="PS01244">
    <property type="entry name" value="ACONITASE_2"/>
    <property type="match status" value="1"/>
</dbReference>
<protein>
    <recommendedName>
        <fullName>Iron-responsive element-binding protein 2</fullName>
        <shortName>IRE-BP 2</shortName>
    </recommendedName>
</protein>
<keyword id="KW-0004">4Fe-4S</keyword>
<keyword id="KW-0963">Cytoplasm</keyword>
<keyword id="KW-0408">Iron</keyword>
<keyword id="KW-0411">Iron-sulfur</keyword>
<keyword id="KW-0479">Metal-binding</keyword>
<keyword id="KW-1185">Reference proteome</keyword>
<keyword id="KW-0694">RNA-binding</keyword>
<keyword id="KW-0832">Ubl conjugation</keyword>
<name>IREB2_PIG</name>
<sequence>MDAPSAGYAFEYLIETLNDSSHKKFFNVPRLGGTKYDVLPYSIRVLLEAAVRNCDGFLMKKEDVMNILDWKTKQSNVEVPFFPGRVLLQDFTGIPAMVDFAAMREAVKTLGGDPKKVHPACPTDLTVDHSLQIDFNKCAIQNAPNPGGGDLQKAGKLSPLRVQPKKLPCRGQTACRGSCDSGDLGRNSGKFSSQIENTPILCPFHLQPVPEPETVLKNQEVEFGRNRERLQFFKWSSRVFKNVAVIPPGTGMAHQVNLEYLSRVVFEEKDLLFPDSVVGTDSHITMVNGLGILGWGVGGIETEAVMLGLPVSLTLPEVVGCELTGSSNPFVTSIDVVLGITKHLRQIGVAGKFVEFFGSGVSQLSIVDRTTIANMCPEYGAILSFFPVDNVTLKHLEYTGFNKAKLKSMETYLKAVKLFRNDQDNSGEPEYSQVIQINLNSIVPSVSGPKRPQDRVAVTDMKSDFQACLNEKVGFKGFQIAAEKQNDTVSIHYEGSEYKLSHGSVVIAAVISCTNNCNPSVMLAAGLLAKKAVEAGLRVKPYIRTSLSPGSGMVTHYLSSSGVLPYLSKLGFEIVGYGCSTCVGNTAPLSEAVLNAVKQGDLVTCGVLSGNKNFEGRLCDCVRANYLASPPLVVAYAIAGTVNIDFRTEPLGTDPTGKNIYLHDIWPSREEVHQIEEEHVVLSMFKALKEKIEMGNKRWNSLEAPDSVLFPWDLKSTYIRCPSFFDKLTKEPVALQPIENAHVLLYLGDSVTTDHISPAGSIARSSAAAKYLTNRGLTPREFNSYGARRGNDAVMTRGTFANIKLFNKFIGKPAPKTIHFPSGQTLDVFEAAELYQKEGIPLIILAGKKYGSGNSRDWAAKGPYLLGVKAVLAESYEKIHKDHLIGIGIAPLQFLPGENADSLGLSGRETFSLTFPEELSPGVTLNIKTSTGKIFSVIASFENDVEIILYKHGGLLNFVARKFS</sequence>
<evidence type="ECO:0000250" key="1"/>
<evidence type="ECO:0000250" key="2">
    <source>
        <dbReference type="UniProtKB" id="P48200"/>
    </source>
</evidence>
<evidence type="ECO:0000250" key="3">
    <source>
        <dbReference type="UniProtKB" id="Q811J3"/>
    </source>
</evidence>
<evidence type="ECO:0000305" key="4"/>